<keyword id="KW-0963">Cytoplasm</keyword>
<keyword id="KW-0269">Exonuclease</keyword>
<keyword id="KW-0378">Hydrolase</keyword>
<keyword id="KW-0540">Nuclease</keyword>
<keyword id="KW-1185">Reference proteome</keyword>
<reference key="1">
    <citation type="journal article" date="2006" name="J. Bacteriol.">
        <title>The genome sequence of the obligately chemolithoautotrophic, facultatively anaerobic bacterium Thiobacillus denitrificans.</title>
        <authorList>
            <person name="Beller H.R."/>
            <person name="Chain P.S."/>
            <person name="Letain T.E."/>
            <person name="Chakicherla A."/>
            <person name="Larimer F.W."/>
            <person name="Richardson P.M."/>
            <person name="Coleman M.A."/>
            <person name="Wood A.P."/>
            <person name="Kelly D.P."/>
        </authorList>
    </citation>
    <scope>NUCLEOTIDE SEQUENCE [LARGE SCALE GENOMIC DNA]</scope>
    <source>
        <strain>ATCC 25259 / T1</strain>
    </source>
</reference>
<proteinExistence type="inferred from homology"/>
<comment type="function">
    <text evidence="1">Bidirectionally degrades single-stranded DNA into large acid-insoluble oligonucleotides, which are then degraded further into small acid-soluble oligonucleotides.</text>
</comment>
<comment type="catalytic activity">
    <reaction evidence="1">
        <text>Exonucleolytic cleavage in either 5'- to 3'- or 3'- to 5'-direction to yield nucleoside 5'-phosphates.</text>
        <dbReference type="EC" id="3.1.11.6"/>
    </reaction>
</comment>
<comment type="subunit">
    <text evidence="1">Heterooligomer composed of large and small subunits.</text>
</comment>
<comment type="subcellular location">
    <subcellularLocation>
        <location evidence="1">Cytoplasm</location>
    </subcellularLocation>
</comment>
<comment type="similarity">
    <text evidence="1">Belongs to the XseA family.</text>
</comment>
<dbReference type="EC" id="3.1.11.6" evidence="1"/>
<dbReference type="EMBL" id="CP000116">
    <property type="protein sequence ID" value="AAZ97464.1"/>
    <property type="molecule type" value="Genomic_DNA"/>
</dbReference>
<dbReference type="RefSeq" id="WP_011312023.1">
    <property type="nucleotide sequence ID" value="NC_007404.1"/>
</dbReference>
<dbReference type="SMR" id="Q3SIR1"/>
<dbReference type="STRING" id="292415.Tbd_1511"/>
<dbReference type="KEGG" id="tbd:Tbd_1511"/>
<dbReference type="eggNOG" id="COG1570">
    <property type="taxonomic scope" value="Bacteria"/>
</dbReference>
<dbReference type="HOGENOM" id="CLU_023625_3_1_4"/>
<dbReference type="OrthoDB" id="9802795at2"/>
<dbReference type="Proteomes" id="UP000008291">
    <property type="component" value="Chromosome"/>
</dbReference>
<dbReference type="GO" id="GO:0005737">
    <property type="term" value="C:cytoplasm"/>
    <property type="evidence" value="ECO:0007669"/>
    <property type="project" value="UniProtKB-SubCell"/>
</dbReference>
<dbReference type="GO" id="GO:0009318">
    <property type="term" value="C:exodeoxyribonuclease VII complex"/>
    <property type="evidence" value="ECO:0007669"/>
    <property type="project" value="InterPro"/>
</dbReference>
<dbReference type="GO" id="GO:0008855">
    <property type="term" value="F:exodeoxyribonuclease VII activity"/>
    <property type="evidence" value="ECO:0007669"/>
    <property type="project" value="UniProtKB-UniRule"/>
</dbReference>
<dbReference type="GO" id="GO:0003676">
    <property type="term" value="F:nucleic acid binding"/>
    <property type="evidence" value="ECO:0007669"/>
    <property type="project" value="InterPro"/>
</dbReference>
<dbReference type="GO" id="GO:0006308">
    <property type="term" value="P:DNA catabolic process"/>
    <property type="evidence" value="ECO:0007669"/>
    <property type="project" value="UniProtKB-UniRule"/>
</dbReference>
<dbReference type="CDD" id="cd04489">
    <property type="entry name" value="ExoVII_LU_OBF"/>
    <property type="match status" value="1"/>
</dbReference>
<dbReference type="HAMAP" id="MF_00378">
    <property type="entry name" value="Exonuc_7_L"/>
    <property type="match status" value="1"/>
</dbReference>
<dbReference type="InterPro" id="IPR003753">
    <property type="entry name" value="Exonuc_VII_L"/>
</dbReference>
<dbReference type="InterPro" id="IPR020579">
    <property type="entry name" value="Exonuc_VII_lsu_C"/>
</dbReference>
<dbReference type="InterPro" id="IPR025824">
    <property type="entry name" value="OB-fold_nuc-bd_dom"/>
</dbReference>
<dbReference type="NCBIfam" id="TIGR00237">
    <property type="entry name" value="xseA"/>
    <property type="match status" value="1"/>
</dbReference>
<dbReference type="PANTHER" id="PTHR30008">
    <property type="entry name" value="EXODEOXYRIBONUCLEASE 7 LARGE SUBUNIT"/>
    <property type="match status" value="1"/>
</dbReference>
<dbReference type="PANTHER" id="PTHR30008:SF0">
    <property type="entry name" value="EXODEOXYRIBONUCLEASE 7 LARGE SUBUNIT"/>
    <property type="match status" value="1"/>
</dbReference>
<dbReference type="Pfam" id="PF02601">
    <property type="entry name" value="Exonuc_VII_L"/>
    <property type="match status" value="1"/>
</dbReference>
<dbReference type="Pfam" id="PF13742">
    <property type="entry name" value="tRNA_anti_2"/>
    <property type="match status" value="1"/>
</dbReference>
<feature type="chain" id="PRO_1000205683" description="Exodeoxyribonuclease 7 large subunit">
    <location>
        <begin position="1"/>
        <end position="451"/>
    </location>
</feature>
<evidence type="ECO:0000255" key="1">
    <source>
        <dbReference type="HAMAP-Rule" id="MF_00378"/>
    </source>
</evidence>
<accession>Q3SIR1</accession>
<name>EX7L_THIDA</name>
<sequence length="451" mass="49204">MDWSEDPGMPPPAPPVLSVSELNRMARRALESQLPLLWVEGEVSNFMRAASGHWYFSLKDATAQVRCVMFRGRNQFAEFTPANGDHVEIRALPSLYEARGEFQLGAESIRRAGAGRLYEAFVRLKAKLEGEGLFDPAKKRALPRFPRCLGVVTSPQAAALRDVLTALGRRMPGLPVILYPTPVQGSGAGAQIAAAIRAAGTRAECDVLLVCRGGGALEDLWAFNDEAVARAIAASPIPVVSGVGHETDFTLADFAADLRAPTPTAAAELASPVAEEMLRALERHARLLRQHHARRQQADMQRLDYLARRLIHPAQQLRRRQLGIAQLAQRLHGAVRARLTREQLRIAQLGERRTSPRHALQRQQQVLESLGARAARAAESARIGRGLTLARLASSLAHLNPDNVLARGYSIVQQENGAVVHDAATLRAGDGLEIRFHRGAAHARVESAQPE</sequence>
<organism>
    <name type="scientific">Thiobacillus denitrificans (strain ATCC 25259 / T1)</name>
    <dbReference type="NCBI Taxonomy" id="292415"/>
    <lineage>
        <taxon>Bacteria</taxon>
        <taxon>Pseudomonadati</taxon>
        <taxon>Pseudomonadota</taxon>
        <taxon>Betaproteobacteria</taxon>
        <taxon>Nitrosomonadales</taxon>
        <taxon>Thiobacillaceae</taxon>
        <taxon>Thiobacillus</taxon>
    </lineage>
</organism>
<gene>
    <name evidence="1" type="primary">xseA</name>
    <name type="ordered locus">Tbd_1511</name>
</gene>
<protein>
    <recommendedName>
        <fullName evidence="1">Exodeoxyribonuclease 7 large subunit</fullName>
        <ecNumber evidence="1">3.1.11.6</ecNumber>
    </recommendedName>
    <alternativeName>
        <fullName evidence="1">Exodeoxyribonuclease VII large subunit</fullName>
        <shortName evidence="1">Exonuclease VII large subunit</shortName>
    </alternativeName>
</protein>